<feature type="chain" id="PRO_1000006409" description="Glycine--tRNA ligase beta subunit">
    <location>
        <begin position="1"/>
        <end position="688"/>
    </location>
</feature>
<reference key="1">
    <citation type="submission" date="2006-08" db="EMBL/GenBank/DDBJ databases">
        <title>Complete sequence of chromosome 1 of Shewanella sp. MR-7.</title>
        <authorList>
            <person name="Copeland A."/>
            <person name="Lucas S."/>
            <person name="Lapidus A."/>
            <person name="Barry K."/>
            <person name="Detter J.C."/>
            <person name="Glavina del Rio T."/>
            <person name="Hammon N."/>
            <person name="Israni S."/>
            <person name="Dalin E."/>
            <person name="Tice H."/>
            <person name="Pitluck S."/>
            <person name="Kiss H."/>
            <person name="Brettin T."/>
            <person name="Bruce D."/>
            <person name="Han C."/>
            <person name="Tapia R."/>
            <person name="Gilna P."/>
            <person name="Schmutz J."/>
            <person name="Larimer F."/>
            <person name="Land M."/>
            <person name="Hauser L."/>
            <person name="Kyrpides N."/>
            <person name="Mikhailova N."/>
            <person name="Nealson K."/>
            <person name="Konstantinidis K."/>
            <person name="Klappenbach J."/>
            <person name="Tiedje J."/>
            <person name="Richardson P."/>
        </authorList>
    </citation>
    <scope>NUCLEOTIDE SEQUENCE [LARGE SCALE GENOMIC DNA]</scope>
    <source>
        <strain>MR-7</strain>
    </source>
</reference>
<keyword id="KW-0030">Aminoacyl-tRNA synthetase</keyword>
<keyword id="KW-0067">ATP-binding</keyword>
<keyword id="KW-0963">Cytoplasm</keyword>
<keyword id="KW-0436">Ligase</keyword>
<keyword id="KW-0547">Nucleotide-binding</keyword>
<keyword id="KW-0648">Protein biosynthesis</keyword>
<accession>Q0I0U1</accession>
<comment type="catalytic activity">
    <reaction evidence="1">
        <text>tRNA(Gly) + glycine + ATP = glycyl-tRNA(Gly) + AMP + diphosphate</text>
        <dbReference type="Rhea" id="RHEA:16013"/>
        <dbReference type="Rhea" id="RHEA-COMP:9664"/>
        <dbReference type="Rhea" id="RHEA-COMP:9683"/>
        <dbReference type="ChEBI" id="CHEBI:30616"/>
        <dbReference type="ChEBI" id="CHEBI:33019"/>
        <dbReference type="ChEBI" id="CHEBI:57305"/>
        <dbReference type="ChEBI" id="CHEBI:78442"/>
        <dbReference type="ChEBI" id="CHEBI:78522"/>
        <dbReference type="ChEBI" id="CHEBI:456215"/>
        <dbReference type="EC" id="6.1.1.14"/>
    </reaction>
</comment>
<comment type="subunit">
    <text evidence="1">Tetramer of two alpha and two beta subunits.</text>
</comment>
<comment type="subcellular location">
    <subcellularLocation>
        <location evidence="1">Cytoplasm</location>
    </subcellularLocation>
</comment>
<comment type="similarity">
    <text evidence="1">Belongs to the class-II aminoacyl-tRNA synthetase family.</text>
</comment>
<protein>
    <recommendedName>
        <fullName evidence="1">Glycine--tRNA ligase beta subunit</fullName>
        <ecNumber evidence="1">6.1.1.14</ecNumber>
    </recommendedName>
    <alternativeName>
        <fullName evidence="1">Glycyl-tRNA synthetase beta subunit</fullName>
        <shortName evidence="1">GlyRS</shortName>
    </alternativeName>
</protein>
<sequence length="688" mass="75112">MNFENLLIELGTEELPPKALRKLAESFLANFTEELTKADLAFKSAAWYAAPRRLAINVTELAIAQADKIVEKRGPAVSSAFDAEGKPTKAAEGWARGNGITVDQAERLVTDKGEWLVYNAKVEGVETKSLIAAMAQRALDKLPIPKPMRWGSSKTQFIRPVHTATMLLGSELIEGELLGIKSARNVRGHRFMGTGFELDHADNYLTLLKEKGKVIADYESRKALIKADAEKAAAKIGGTADIEDDLLEEVTSLVEWPVVLTASFEEKFLNVPSEALVYTMKGDQKYFPVFDEAGKLLPNFIFVANIESKDPAQIIAGNEKVVRPRLADAEFFFNTDKKHTLESRLPSLETVLFQQQLGTLKDKVTRISALAAFIAEQTGANAVDAARAGLLSKTDLMTNMVMEFTDTQGTMGMHYARLDGETEAVALAMEEQYKPKFSGDTVPTAAVSCAVALADKLDTLVGIFGIGQAPKGAADPFALRRAAIGVLRIIVENKLPLDLVTLIAKAQELHGTNLSNANASDEVLEFLMARFRAWYQDKGIDVDVILAVLARRPTRPADFDSRINAVSHFRSLEASSALAAANKRVSNILAKVEGELPTAINSALLAEAAEQALAAKLAELQPQLAPLFANADYQQALTLLSSLRESVDQFFEDVMVMADDEALKNNRLALLNNLREQFLHVADISLLQ</sequence>
<name>SYGB_SHESR</name>
<proteinExistence type="inferred from homology"/>
<organism>
    <name type="scientific">Shewanella sp. (strain MR-7)</name>
    <dbReference type="NCBI Taxonomy" id="60481"/>
    <lineage>
        <taxon>Bacteria</taxon>
        <taxon>Pseudomonadati</taxon>
        <taxon>Pseudomonadota</taxon>
        <taxon>Gammaproteobacteria</taxon>
        <taxon>Alteromonadales</taxon>
        <taxon>Shewanellaceae</taxon>
        <taxon>Shewanella</taxon>
    </lineage>
</organism>
<evidence type="ECO:0000255" key="1">
    <source>
        <dbReference type="HAMAP-Rule" id="MF_00255"/>
    </source>
</evidence>
<dbReference type="EC" id="6.1.1.14" evidence="1"/>
<dbReference type="EMBL" id="CP000444">
    <property type="protein sequence ID" value="ABI41014.1"/>
    <property type="molecule type" value="Genomic_DNA"/>
</dbReference>
<dbReference type="SMR" id="Q0I0U1"/>
<dbReference type="KEGG" id="shm:Shewmr7_0008"/>
<dbReference type="HOGENOM" id="CLU_007220_2_2_6"/>
<dbReference type="GO" id="GO:0005829">
    <property type="term" value="C:cytosol"/>
    <property type="evidence" value="ECO:0007669"/>
    <property type="project" value="TreeGrafter"/>
</dbReference>
<dbReference type="GO" id="GO:0004814">
    <property type="term" value="F:arginine-tRNA ligase activity"/>
    <property type="evidence" value="ECO:0007669"/>
    <property type="project" value="InterPro"/>
</dbReference>
<dbReference type="GO" id="GO:0005524">
    <property type="term" value="F:ATP binding"/>
    <property type="evidence" value="ECO:0007669"/>
    <property type="project" value="UniProtKB-UniRule"/>
</dbReference>
<dbReference type="GO" id="GO:0004820">
    <property type="term" value="F:glycine-tRNA ligase activity"/>
    <property type="evidence" value="ECO:0007669"/>
    <property type="project" value="UniProtKB-UniRule"/>
</dbReference>
<dbReference type="GO" id="GO:0006420">
    <property type="term" value="P:arginyl-tRNA aminoacylation"/>
    <property type="evidence" value="ECO:0007669"/>
    <property type="project" value="InterPro"/>
</dbReference>
<dbReference type="GO" id="GO:0006426">
    <property type="term" value="P:glycyl-tRNA aminoacylation"/>
    <property type="evidence" value="ECO:0007669"/>
    <property type="project" value="UniProtKB-UniRule"/>
</dbReference>
<dbReference type="Gene3D" id="1.10.730.10">
    <property type="entry name" value="Isoleucyl-tRNA Synthetase, Domain 1"/>
    <property type="match status" value="1"/>
</dbReference>
<dbReference type="HAMAP" id="MF_00255">
    <property type="entry name" value="Gly_tRNA_synth_beta"/>
    <property type="match status" value="1"/>
</dbReference>
<dbReference type="InterPro" id="IPR008909">
    <property type="entry name" value="DALR_anticod-bd"/>
</dbReference>
<dbReference type="InterPro" id="IPR015944">
    <property type="entry name" value="Gly-tRNA-synth_bsu"/>
</dbReference>
<dbReference type="InterPro" id="IPR006194">
    <property type="entry name" value="Gly-tRNA-synth_heterodimer"/>
</dbReference>
<dbReference type="NCBIfam" id="TIGR00211">
    <property type="entry name" value="glyS"/>
    <property type="match status" value="1"/>
</dbReference>
<dbReference type="PANTHER" id="PTHR30075:SF2">
    <property type="entry name" value="GLYCINE--TRNA LIGASE, CHLOROPLASTIC_MITOCHONDRIAL 2"/>
    <property type="match status" value="1"/>
</dbReference>
<dbReference type="PANTHER" id="PTHR30075">
    <property type="entry name" value="GLYCYL-TRNA SYNTHETASE"/>
    <property type="match status" value="1"/>
</dbReference>
<dbReference type="Pfam" id="PF05746">
    <property type="entry name" value="DALR_1"/>
    <property type="match status" value="1"/>
</dbReference>
<dbReference type="Pfam" id="PF02092">
    <property type="entry name" value="tRNA_synt_2f"/>
    <property type="match status" value="1"/>
</dbReference>
<dbReference type="PRINTS" id="PR01045">
    <property type="entry name" value="TRNASYNTHGB"/>
</dbReference>
<dbReference type="SMART" id="SM00836">
    <property type="entry name" value="DALR_1"/>
    <property type="match status" value="1"/>
</dbReference>
<dbReference type="SUPFAM" id="SSF109604">
    <property type="entry name" value="HD-domain/PDEase-like"/>
    <property type="match status" value="1"/>
</dbReference>
<dbReference type="PROSITE" id="PS50861">
    <property type="entry name" value="AA_TRNA_LIGASE_II_GLYAB"/>
    <property type="match status" value="1"/>
</dbReference>
<gene>
    <name evidence="1" type="primary">glyS</name>
    <name type="ordered locus">Shewmr7_0008</name>
</gene>